<sequence>MLQSLAGSSCVRLVERHRSAWCFGFLVLGYLLYLVFGAVVFSSVELPYEDLLRQELRKLKRRFLEEHECLSEPQLEQFLGRVLEASNYGVSVLSNASGNWNWDFTSALFFASTVLSTTGYGHTVPLSDGGKAFCIIYSVIGIPFTLLFLTAVVQRVTIHVTRRPVLYFHVRWGFSKQAVAIVHAVLLGVVTVSCFFFIPAAVFSVLEDDWNFLESFYFCFISLSTIGLGDYVPGEGYNQKFRELYKIGITCYLLLGLIAMLVVLETFCELHELKKFRKMFYVKKDKEEDQMHIIEHDQLSFSSITDQAAGVQEDQKQNEPFVSPQPPALADGASDH</sequence>
<keyword id="KW-1003">Cell membrane</keyword>
<keyword id="KW-0966">Cell projection</keyword>
<keyword id="KW-0968">Cytoplasmic vesicle</keyword>
<keyword id="KW-1015">Disulfide bond</keyword>
<keyword id="KW-0967">Endosome</keyword>
<keyword id="KW-0325">Glycoprotein</keyword>
<keyword id="KW-0407">Ion channel</keyword>
<keyword id="KW-0406">Ion transport</keyword>
<keyword id="KW-1017">Isopeptide bond</keyword>
<keyword id="KW-0472">Membrane</keyword>
<keyword id="KW-0630">Potassium</keyword>
<keyword id="KW-0631">Potassium channel</keyword>
<keyword id="KW-0633">Potassium transport</keyword>
<keyword id="KW-1185">Reference proteome</keyword>
<keyword id="KW-0770">Synapse</keyword>
<keyword id="KW-0812">Transmembrane</keyword>
<keyword id="KW-1133">Transmembrane helix</keyword>
<keyword id="KW-0813">Transport</keyword>
<keyword id="KW-0832">Ubl conjugation</keyword>
<accession>Q0P5A0</accession>
<gene>
    <name evidence="6" type="primary">KCNK1</name>
</gene>
<dbReference type="EMBL" id="BC120311">
    <property type="protein sequence ID" value="AAI20312.1"/>
    <property type="molecule type" value="mRNA"/>
</dbReference>
<dbReference type="RefSeq" id="NP_001068675.1">
    <property type="nucleotide sequence ID" value="NM_001075207.1"/>
</dbReference>
<dbReference type="SMR" id="Q0P5A0"/>
<dbReference type="FunCoup" id="Q0P5A0">
    <property type="interactions" value="181"/>
</dbReference>
<dbReference type="STRING" id="9913.ENSBTAP00000005929"/>
<dbReference type="GlyCosmos" id="Q0P5A0">
    <property type="glycosylation" value="1 site, No reported glycans"/>
</dbReference>
<dbReference type="GlyGen" id="Q0P5A0">
    <property type="glycosylation" value="1 site"/>
</dbReference>
<dbReference type="PaxDb" id="9913-ENSBTAP00000005929"/>
<dbReference type="Ensembl" id="ENSBTAT00000005929.6">
    <property type="protein sequence ID" value="ENSBTAP00000005929.5"/>
    <property type="gene ID" value="ENSBTAG00000004515.7"/>
</dbReference>
<dbReference type="GeneID" id="505563"/>
<dbReference type="KEGG" id="bta:505563"/>
<dbReference type="CTD" id="3775"/>
<dbReference type="VEuPathDB" id="HostDB:ENSBTAG00000004515"/>
<dbReference type="VGNC" id="VGNC:30465">
    <property type="gene designation" value="KCNK1"/>
</dbReference>
<dbReference type="eggNOG" id="KOG1418">
    <property type="taxonomic scope" value="Eukaryota"/>
</dbReference>
<dbReference type="GeneTree" id="ENSGT00940000155293"/>
<dbReference type="HOGENOM" id="CLU_022504_6_0_1"/>
<dbReference type="InParanoid" id="Q0P5A0"/>
<dbReference type="OMA" id="SAWCFGL"/>
<dbReference type="OrthoDB" id="297496at2759"/>
<dbReference type="TreeFam" id="TF313947"/>
<dbReference type="Reactome" id="R-BTA-1299308">
    <property type="pathway name" value="Tandem of pore domain in a weak inwardly rectifying K+ channels (TWIK)"/>
</dbReference>
<dbReference type="Reactome" id="R-BTA-5576886">
    <property type="pathway name" value="Phase 4 - resting membrane potential"/>
</dbReference>
<dbReference type="Proteomes" id="UP000009136">
    <property type="component" value="Chromosome 28"/>
</dbReference>
<dbReference type="Bgee" id="ENSBTAG00000004515">
    <property type="expression patterns" value="Expressed in corpus epididymis and 95 other cell types or tissues"/>
</dbReference>
<dbReference type="GO" id="GO:0016324">
    <property type="term" value="C:apical plasma membrane"/>
    <property type="evidence" value="ECO:0007669"/>
    <property type="project" value="UniProtKB-SubCell"/>
</dbReference>
<dbReference type="GO" id="GO:0030425">
    <property type="term" value="C:dendrite"/>
    <property type="evidence" value="ECO:0007669"/>
    <property type="project" value="UniProtKB-SubCell"/>
</dbReference>
<dbReference type="GO" id="GO:0016020">
    <property type="term" value="C:membrane"/>
    <property type="evidence" value="ECO:0000250"/>
    <property type="project" value="UniProtKB"/>
</dbReference>
<dbReference type="GO" id="GO:0043204">
    <property type="term" value="C:perikaryon"/>
    <property type="evidence" value="ECO:0007669"/>
    <property type="project" value="UniProtKB-SubCell"/>
</dbReference>
<dbReference type="GO" id="GO:0005886">
    <property type="term" value="C:plasma membrane"/>
    <property type="evidence" value="ECO:0000250"/>
    <property type="project" value="UniProtKB"/>
</dbReference>
<dbReference type="GO" id="GO:0034705">
    <property type="term" value="C:potassium channel complex"/>
    <property type="evidence" value="ECO:0000250"/>
    <property type="project" value="UniProtKB"/>
</dbReference>
<dbReference type="GO" id="GO:0055037">
    <property type="term" value="C:recycling endosome"/>
    <property type="evidence" value="ECO:0007669"/>
    <property type="project" value="UniProtKB-SubCell"/>
</dbReference>
<dbReference type="GO" id="GO:0097060">
    <property type="term" value="C:synaptic membrane"/>
    <property type="evidence" value="ECO:0007669"/>
    <property type="project" value="UniProtKB-SubCell"/>
</dbReference>
<dbReference type="GO" id="GO:0042802">
    <property type="term" value="F:identical protein binding"/>
    <property type="evidence" value="ECO:0000250"/>
    <property type="project" value="UniProtKB"/>
</dbReference>
<dbReference type="GO" id="GO:0022834">
    <property type="term" value="F:ligand-gated channel activity"/>
    <property type="evidence" value="ECO:0000250"/>
    <property type="project" value="UniProtKB"/>
</dbReference>
<dbReference type="GO" id="GO:0005267">
    <property type="term" value="F:potassium channel activity"/>
    <property type="evidence" value="ECO:0000250"/>
    <property type="project" value="UniProtKB"/>
</dbReference>
<dbReference type="GO" id="GO:0022841">
    <property type="term" value="F:potassium ion leak channel activity"/>
    <property type="evidence" value="ECO:0000250"/>
    <property type="project" value="UniProtKB"/>
</dbReference>
<dbReference type="GO" id="GO:0046982">
    <property type="term" value="F:protein heterodimerization activity"/>
    <property type="evidence" value="ECO:0000250"/>
    <property type="project" value="UniProtKB"/>
</dbReference>
<dbReference type="GO" id="GO:0005272">
    <property type="term" value="F:sodium channel activity"/>
    <property type="evidence" value="ECO:0000250"/>
    <property type="project" value="UniProtKB"/>
</dbReference>
<dbReference type="GO" id="GO:1902476">
    <property type="term" value="P:chloride transmembrane transport"/>
    <property type="evidence" value="ECO:0000250"/>
    <property type="project" value="UniProtKB"/>
</dbReference>
<dbReference type="GO" id="GO:0014047">
    <property type="term" value="P:glutamate secretion"/>
    <property type="evidence" value="ECO:0000250"/>
    <property type="project" value="UniProtKB"/>
</dbReference>
<dbReference type="GO" id="GO:0071805">
    <property type="term" value="P:potassium ion transmembrane transport"/>
    <property type="evidence" value="ECO:0000250"/>
    <property type="project" value="UniProtKB"/>
</dbReference>
<dbReference type="GO" id="GO:0060075">
    <property type="term" value="P:regulation of resting membrane potential"/>
    <property type="evidence" value="ECO:0000250"/>
    <property type="project" value="UniProtKB"/>
</dbReference>
<dbReference type="GO" id="GO:0035725">
    <property type="term" value="P:sodium ion transmembrane transport"/>
    <property type="evidence" value="ECO:0000250"/>
    <property type="project" value="UniProtKB"/>
</dbReference>
<dbReference type="FunFam" id="1.10.287.70:FF:000076">
    <property type="entry name" value="Potassium channel subfamily K member"/>
    <property type="match status" value="1"/>
</dbReference>
<dbReference type="Gene3D" id="1.10.287.70">
    <property type="match status" value="1"/>
</dbReference>
<dbReference type="InterPro" id="IPR003280">
    <property type="entry name" value="2pore_dom_K_chnl"/>
</dbReference>
<dbReference type="InterPro" id="IPR003092">
    <property type="entry name" value="2pore_dom_K_chnl_TASK"/>
</dbReference>
<dbReference type="InterPro" id="IPR005408">
    <property type="entry name" value="2pore_dom_K_chnl_TWIK"/>
</dbReference>
<dbReference type="InterPro" id="IPR001779">
    <property type="entry name" value="2pore_dom_K_chnl_TWIK1"/>
</dbReference>
<dbReference type="InterPro" id="IPR013099">
    <property type="entry name" value="K_chnl_dom"/>
</dbReference>
<dbReference type="PANTHER" id="PTHR11003:SF59">
    <property type="entry name" value="POTASSIUM CHANNEL SUBFAMILY K MEMBER 1"/>
    <property type="match status" value="1"/>
</dbReference>
<dbReference type="PANTHER" id="PTHR11003">
    <property type="entry name" value="POTASSIUM CHANNEL, SUBFAMILY K"/>
    <property type="match status" value="1"/>
</dbReference>
<dbReference type="Pfam" id="PF07885">
    <property type="entry name" value="Ion_trans_2"/>
    <property type="match status" value="2"/>
</dbReference>
<dbReference type="PIRSF" id="PIRSF038061">
    <property type="entry name" value="K_channel_subfamily_K_type"/>
    <property type="match status" value="1"/>
</dbReference>
<dbReference type="PRINTS" id="PR01333">
    <property type="entry name" value="2POREKCHANEL"/>
</dbReference>
<dbReference type="PRINTS" id="PR01096">
    <property type="entry name" value="TWIK1CHANNEL"/>
</dbReference>
<dbReference type="PRINTS" id="PR01586">
    <property type="entry name" value="TWIKCHANNEL"/>
</dbReference>
<dbReference type="SUPFAM" id="SSF81324">
    <property type="entry name" value="Voltage-gated potassium channels"/>
    <property type="match status" value="2"/>
</dbReference>
<evidence type="ECO:0000250" key="1">
    <source>
        <dbReference type="UniProtKB" id="O00180"/>
    </source>
</evidence>
<evidence type="ECO:0000250" key="2">
    <source>
        <dbReference type="UniProtKB" id="O08581"/>
    </source>
</evidence>
<evidence type="ECO:0000250" key="3">
    <source>
        <dbReference type="UniProtKB" id="Q9Z2T2"/>
    </source>
</evidence>
<evidence type="ECO:0000255" key="4"/>
<evidence type="ECO:0000256" key="5">
    <source>
        <dbReference type="SAM" id="MobiDB-lite"/>
    </source>
</evidence>
<evidence type="ECO:0000312" key="6">
    <source>
        <dbReference type="EMBL" id="AAI20312.1"/>
    </source>
</evidence>
<proteinExistence type="evidence at transcript level"/>
<feature type="chain" id="PRO_0000299068" description="Potassium channel subfamily K member 1">
    <location>
        <begin position="1"/>
        <end position="336"/>
    </location>
</feature>
<feature type="topological domain" description="Cytoplasmic" evidence="1">
    <location>
        <begin position="1"/>
        <end position="20"/>
    </location>
</feature>
<feature type="transmembrane region" description="Helical" evidence="1">
    <location>
        <begin position="21"/>
        <end position="41"/>
    </location>
</feature>
<feature type="topological domain" description="Extracellular" evidence="1">
    <location>
        <begin position="42"/>
        <end position="103"/>
    </location>
</feature>
<feature type="intramembrane region" description="Helical; Name=Pore helix 1" evidence="1">
    <location>
        <begin position="104"/>
        <end position="116"/>
    </location>
</feature>
<feature type="intramembrane region" evidence="1">
    <location>
        <begin position="117"/>
        <end position="122"/>
    </location>
</feature>
<feature type="topological domain" description="Extracellular" evidence="1">
    <location>
        <begin position="123"/>
        <end position="132"/>
    </location>
</feature>
<feature type="transmembrane region" description="Helical" evidence="1">
    <location>
        <begin position="133"/>
        <end position="156"/>
    </location>
</feature>
<feature type="topological domain" description="Cytoplasmic" evidence="1">
    <location>
        <begin position="157"/>
        <end position="181"/>
    </location>
</feature>
<feature type="transmembrane region" description="Helical" evidence="1">
    <location>
        <begin position="182"/>
        <end position="202"/>
    </location>
</feature>
<feature type="topological domain" description="Extracellular" evidence="1">
    <location>
        <begin position="203"/>
        <end position="211"/>
    </location>
</feature>
<feature type="intramembrane region" description="Helical; Name=Pore helix 2" evidence="1">
    <location>
        <begin position="212"/>
        <end position="224"/>
    </location>
</feature>
<feature type="intramembrane region" evidence="1">
    <location>
        <begin position="225"/>
        <end position="231"/>
    </location>
</feature>
<feature type="topological domain" description="Extracellular" evidence="1">
    <location>
        <begin position="232"/>
        <end position="243"/>
    </location>
</feature>
<feature type="transmembrane region" description="Helical" evidence="1">
    <location>
        <begin position="244"/>
        <end position="267"/>
    </location>
</feature>
<feature type="topological domain" description="Cytoplasmic" evidence="1">
    <location>
        <begin position="268"/>
        <end position="336"/>
    </location>
</feature>
<feature type="region of interest" description="Selectivity filter 1" evidence="1">
    <location>
        <begin position="117"/>
        <end position="122"/>
    </location>
</feature>
<feature type="region of interest" description="Selectivity filter 2" evidence="1">
    <location>
        <begin position="225"/>
        <end position="230"/>
    </location>
</feature>
<feature type="region of interest" description="Important for intracellular retention in recycling endosomes" evidence="1">
    <location>
        <begin position="293"/>
        <end position="299"/>
    </location>
</feature>
<feature type="region of interest" description="Disordered" evidence="5">
    <location>
        <begin position="307"/>
        <end position="336"/>
    </location>
</feature>
<feature type="site" description="Important for increased permeability to Na(+) when K(+) levels are subphysiological" evidence="1">
    <location>
        <position position="118"/>
    </location>
</feature>
<feature type="site" description="Part of a hydrophobic barrier that is stochastically dewetted and limits ion permeability" evidence="1">
    <location>
        <position position="146"/>
    </location>
</feature>
<feature type="site" description="Part of a hydrophobic barrier that is stochastically dewetted and limits ion permeability" evidence="1">
    <location>
        <position position="261"/>
    </location>
</feature>
<feature type="glycosylation site" description="N-linked (GlcNAc...) asparagine" evidence="4">
    <location>
        <position position="95"/>
    </location>
</feature>
<feature type="disulfide bond" description="Interchain" evidence="1">
    <location>
        <position position="69"/>
    </location>
</feature>
<feature type="cross-link" description="Glycyl lysine isopeptide (Lys-Gly) (interchain with G-Cter in SUMO)" evidence="1">
    <location>
        <position position="274"/>
    </location>
</feature>
<name>KCNK1_BOVIN</name>
<reference evidence="6" key="1">
    <citation type="submission" date="2006-08" db="EMBL/GenBank/DDBJ databases">
        <authorList>
            <consortium name="NIH - Mammalian Gene Collection (MGC) project"/>
        </authorList>
    </citation>
    <scope>NUCLEOTIDE SEQUENCE [LARGE SCALE MRNA]</scope>
    <source>
        <strain evidence="6">Hereford</strain>
        <tissue evidence="6">Hippocampus</tissue>
    </source>
</reference>
<protein>
    <recommendedName>
        <fullName>Potassium channel subfamily K member 1</fullName>
    </recommendedName>
</protein>
<comment type="function">
    <text evidence="1 2 3">Ion channel that contributes to passive transmembrane potassium transport and to the regulation of the resting membrane potential in brain astrocytes, but also in kidney and in other tissues. Forms dimeric channels through which potassium ions pass in accordance with their electrochemical gradient. The channel is selective for K(+) ions at physiological potassium concentrations and at neutral pH, but becomes permeable to Na(+) at subphysiological K(+) levels and upon acidification of the extracellular medium. The homodimer has very low potassium channel activity, when expressed in heterologous systems, and can function as weakly inward rectifying potassium channel (By similarity). Channel activity is modulated by activation of serotonin receptors (By similarity). Heterodimeric channels containing KCNK1 and KCNK2 have much higher activity, and may represent the predominant form in astrocytes (By similarity). Heterodimeric channels containing KCNK1 and KCNK3 or KCNK9 have much higher activity. Heterodimeric channels formed by KCNK1 and KCNK9 may contribute to halothane-sensitive currents (By similarity). Mediates outward rectifying potassium currents in dentate gyrus granule cells and contributes to the regulation of their resting membrane potential (By similarity). Contributes to the regulation of action potential firing in dentate gyrus granule cells and down-regulates their intrinsic excitability (By similarity). In astrocytes, the heterodimer formed by KCNK1 and KCNK2 is required for rapid glutamate release in response to activation of G-protein coupled receptors, such as F2R and CNR1 (By similarity). Required for normal ion and water transport in the kidney (By similarity). Contributes to the regulation of the resting membrane potential of pancreatic beta cells (By similarity). The low channel activity of homodimeric KCNK1 may be due to sumoylation. The low channel activity may be due to rapid internalization from the cell membrane and retention in recycling endosomes (By similarity). Permeable to monovalent cations with ion selectivity for K(+) &gt; Rb(+) &gt;&gt; NH4(+) &gt;&gt; Cs(+) = Na(+) = Li(+).</text>
</comment>
<comment type="catalytic activity">
    <reaction evidence="1">
        <text>K(+)(in) = K(+)(out)</text>
        <dbReference type="Rhea" id="RHEA:29463"/>
        <dbReference type="ChEBI" id="CHEBI:29103"/>
    </reaction>
</comment>
<comment type="catalytic activity">
    <reaction evidence="1">
        <text>NH4(+)(in) = NH4(+)(out)</text>
        <dbReference type="Rhea" id="RHEA:28747"/>
        <dbReference type="ChEBI" id="CHEBI:28938"/>
    </reaction>
</comment>
<comment type="catalytic activity">
    <reaction evidence="1">
        <text>Na(+)(in) = Na(+)(out)</text>
        <dbReference type="Rhea" id="RHEA:34963"/>
        <dbReference type="ChEBI" id="CHEBI:29101"/>
    </reaction>
</comment>
<comment type="catalytic activity">
    <reaction evidence="1">
        <text>Rb(+)(in) = Rb(+)(out)</text>
        <dbReference type="Rhea" id="RHEA:78547"/>
        <dbReference type="ChEBI" id="CHEBI:49847"/>
    </reaction>
</comment>
<comment type="catalytic activity">
    <reaction evidence="1">
        <text>Cs(+)(in) = Cs(+)(out)</text>
        <dbReference type="Rhea" id="RHEA:78555"/>
        <dbReference type="ChEBI" id="CHEBI:49547"/>
    </reaction>
</comment>
<comment type="catalytic activity">
    <reaction evidence="1">
        <text>Li(+)(in) = Li(+)(out)</text>
        <dbReference type="Rhea" id="RHEA:78551"/>
        <dbReference type="ChEBI" id="CHEBI:49713"/>
    </reaction>
</comment>
<comment type="catalytic activity">
    <reaction evidence="2">
        <text>L-glutamate(out) = L-glutamate(in)</text>
        <dbReference type="Rhea" id="RHEA:66336"/>
        <dbReference type="ChEBI" id="CHEBI:29985"/>
    </reaction>
</comment>
<comment type="catalytic activity">
    <reaction evidence="2">
        <text>chloride(in) = chloride(out)</text>
        <dbReference type="Rhea" id="RHEA:29823"/>
        <dbReference type="ChEBI" id="CHEBI:17996"/>
    </reaction>
</comment>
<comment type="subunit">
    <text evidence="1 2">Homodimer; disulfide-linked (By similarity). Heterodimer with KCNK2; disulfide-linked (By similarity). In astrocytes, forms mostly heterodimeric potassium channels with KCNK2, with only a minor proportion of functional channels containing homodimeric KCNK1 (By similarity). Interacts with KCNK3 and KCNK9, forming functional heterodimeric channels (By similarity). Interacts with GNG4 (By similarity). Identified in a complex with PSD and ARF6; interacts only with PSD that is bound to ARF6 (By similarity). Interacts with UBE2I (By similarity).</text>
</comment>
<comment type="subcellular location">
    <subcellularLocation>
        <location evidence="1">Cell membrane</location>
        <topology evidence="1">Multi-pass membrane protein</topology>
    </subcellularLocation>
    <subcellularLocation>
        <location evidence="1">Recycling endosome</location>
    </subcellularLocation>
    <subcellularLocation>
        <location evidence="3">Synaptic cell membrane</location>
    </subcellularLocation>
    <subcellularLocation>
        <location evidence="2">Cytoplasmic vesicle</location>
    </subcellularLocation>
    <subcellularLocation>
        <location evidence="2">Perikaryon</location>
    </subcellularLocation>
    <subcellularLocation>
        <location evidence="2">Cell projection</location>
        <location evidence="2">Dendrite</location>
    </subcellularLocation>
    <subcellularLocation>
        <location evidence="2">Cell projection</location>
    </subcellularLocation>
    <subcellularLocation>
        <location evidence="1">Apical cell membrane</location>
        <topology evidence="1">Multi-pass membrane protein</topology>
    </subcellularLocation>
    <text evidence="1 2 3">The heterodimer with KCNK2 is detected at the astrocyte cell membrane. Not detected at the astrocyte cell membrane when KCNK2 is absent. Detected on neuronal cell bodies, and to a lesser degree on neuronal cell projections. Detected on hippocampus dentate gyrus granule cell bodies and to a lesser degree on proximal dendrites. Detected at the apical cell membrane in stria vascularis in the cochlea. Detected at the apical cell membrane of vestibular dark cells situated between the crista and the utricle in the inner ear. Detected at the apical cell membrane in kidney proximal tubule segment S1 and in subapical compartments in segments S1, S2 and S3. Predominantly in cytoplasmic structures in kidney distal convoluted tubules and collecting ducts (By similarity). Detected at the apical cell membrane of bronchial epithelial cells (By similarity).</text>
</comment>
<comment type="PTM">
    <text evidence="1">Sumoylation is controversial. Sumoylated by UBE2I. Not sumoylated when expressed in xenopus oocytes or mammalian cells. Sumoylation inactivates the channel, but does not interfere with expression at the cell membrane. Sumoylation of a single subunit is sufficient to silence the dimeric channel. Sumoylation of KCNK1 is sufficient to silence heterodimeric channels formed by KCNK1 and KCNK3 or KCNK9. Desumoylated by SENP1; this activates the channel. Desumoylated by SENP1; this strongly increases halothane-mediated activation of heterodimeric channels formed with KCNK9. SENP1 treatment has no effect.</text>
</comment>
<comment type="similarity">
    <text evidence="4">Belongs to the two pore domain potassium channel (TC 1.A.1.8) family.</text>
</comment>
<organism>
    <name type="scientific">Bos taurus</name>
    <name type="common">Bovine</name>
    <dbReference type="NCBI Taxonomy" id="9913"/>
    <lineage>
        <taxon>Eukaryota</taxon>
        <taxon>Metazoa</taxon>
        <taxon>Chordata</taxon>
        <taxon>Craniata</taxon>
        <taxon>Vertebrata</taxon>
        <taxon>Euteleostomi</taxon>
        <taxon>Mammalia</taxon>
        <taxon>Eutheria</taxon>
        <taxon>Laurasiatheria</taxon>
        <taxon>Artiodactyla</taxon>
        <taxon>Ruminantia</taxon>
        <taxon>Pecora</taxon>
        <taxon>Bovidae</taxon>
        <taxon>Bovinae</taxon>
        <taxon>Bos</taxon>
    </lineage>
</organism>